<feature type="chain" id="PRO_0000351783" description="Ribosome maturation factor RimM">
    <location>
        <begin position="1"/>
        <end position="185"/>
    </location>
</feature>
<feature type="domain" description="PRC barrel" evidence="1">
    <location>
        <begin position="103"/>
        <end position="177"/>
    </location>
</feature>
<keyword id="KW-0143">Chaperone</keyword>
<keyword id="KW-0963">Cytoplasm</keyword>
<keyword id="KW-0690">Ribosome biogenesis</keyword>
<keyword id="KW-0698">rRNA processing</keyword>
<reference key="1">
    <citation type="submission" date="2007-11" db="EMBL/GenBank/DDBJ databases">
        <title>Complete sequence of Petroga mobilis SJ95.</title>
        <authorList>
            <consortium name="US DOE Joint Genome Institute"/>
            <person name="Copeland A."/>
            <person name="Lucas S."/>
            <person name="Lapidus A."/>
            <person name="Barry K."/>
            <person name="Glavina del Rio T."/>
            <person name="Dalin E."/>
            <person name="Tice H."/>
            <person name="Pitluck S."/>
            <person name="Meincke L."/>
            <person name="Brettin T."/>
            <person name="Bruce D."/>
            <person name="Detter J.C."/>
            <person name="Han C."/>
            <person name="Kuske C.R."/>
            <person name="Schmutz J."/>
            <person name="Larimer F."/>
            <person name="Land M."/>
            <person name="Hauser L."/>
            <person name="Kyrpides N."/>
            <person name="Mikhailova N."/>
            <person name="Noll K."/>
            <person name="Richardson P."/>
        </authorList>
    </citation>
    <scope>NUCLEOTIDE SEQUENCE [LARGE SCALE GENOMIC DNA]</scope>
    <source>
        <strain>DSM 10674 / SJ95</strain>
    </source>
</reference>
<protein>
    <recommendedName>
        <fullName evidence="1">Ribosome maturation factor RimM</fullName>
    </recommendedName>
</protein>
<name>RIMM_PETMO</name>
<accession>A9BF00</accession>
<gene>
    <name evidence="1" type="primary">rimM</name>
    <name type="ordered locus">Pmob_0322</name>
</gene>
<proteinExistence type="inferred from homology"/>
<comment type="function">
    <text evidence="1">An accessory protein needed during the final step in the assembly of 30S ribosomal subunit, possibly for assembly of the head region. Essential for efficient processing of 16S rRNA. May be needed both before and after RbfA during the maturation of 16S rRNA. It has affinity for free ribosomal 30S subunits but not for 70S ribosomes.</text>
</comment>
<comment type="subunit">
    <text evidence="1">Binds ribosomal protein uS19.</text>
</comment>
<comment type="subcellular location">
    <subcellularLocation>
        <location evidence="1">Cytoplasm</location>
    </subcellularLocation>
</comment>
<comment type="domain">
    <text evidence="1">The PRC barrel domain binds ribosomal protein uS19.</text>
</comment>
<comment type="similarity">
    <text evidence="1">Belongs to the RimM family.</text>
</comment>
<dbReference type="EMBL" id="CP000879">
    <property type="protein sequence ID" value="ABX31064.1"/>
    <property type="molecule type" value="Genomic_DNA"/>
</dbReference>
<dbReference type="RefSeq" id="WP_012208171.1">
    <property type="nucleotide sequence ID" value="NC_010003.1"/>
</dbReference>
<dbReference type="SMR" id="A9BF00"/>
<dbReference type="STRING" id="403833.Pmob_0322"/>
<dbReference type="KEGG" id="pmo:Pmob_0322"/>
<dbReference type="eggNOG" id="COG0806">
    <property type="taxonomic scope" value="Bacteria"/>
</dbReference>
<dbReference type="HOGENOM" id="CLU_077636_3_2_0"/>
<dbReference type="Proteomes" id="UP000000789">
    <property type="component" value="Chromosome"/>
</dbReference>
<dbReference type="GO" id="GO:0005737">
    <property type="term" value="C:cytoplasm"/>
    <property type="evidence" value="ECO:0007669"/>
    <property type="project" value="UniProtKB-SubCell"/>
</dbReference>
<dbReference type="GO" id="GO:0005840">
    <property type="term" value="C:ribosome"/>
    <property type="evidence" value="ECO:0007669"/>
    <property type="project" value="InterPro"/>
</dbReference>
<dbReference type="GO" id="GO:0043022">
    <property type="term" value="F:ribosome binding"/>
    <property type="evidence" value="ECO:0007669"/>
    <property type="project" value="InterPro"/>
</dbReference>
<dbReference type="GO" id="GO:0042274">
    <property type="term" value="P:ribosomal small subunit biogenesis"/>
    <property type="evidence" value="ECO:0007669"/>
    <property type="project" value="UniProtKB-UniRule"/>
</dbReference>
<dbReference type="GO" id="GO:0006364">
    <property type="term" value="P:rRNA processing"/>
    <property type="evidence" value="ECO:0007669"/>
    <property type="project" value="UniProtKB-UniRule"/>
</dbReference>
<dbReference type="Gene3D" id="2.30.30.240">
    <property type="entry name" value="PRC-barrel domain"/>
    <property type="match status" value="1"/>
</dbReference>
<dbReference type="Gene3D" id="2.40.30.60">
    <property type="entry name" value="RimM"/>
    <property type="match status" value="1"/>
</dbReference>
<dbReference type="HAMAP" id="MF_00014">
    <property type="entry name" value="Ribosome_mat_RimM"/>
    <property type="match status" value="1"/>
</dbReference>
<dbReference type="InterPro" id="IPR027275">
    <property type="entry name" value="PRC-brl_dom"/>
</dbReference>
<dbReference type="InterPro" id="IPR011033">
    <property type="entry name" value="PRC_barrel-like_sf"/>
</dbReference>
<dbReference type="InterPro" id="IPR011961">
    <property type="entry name" value="RimM"/>
</dbReference>
<dbReference type="InterPro" id="IPR002676">
    <property type="entry name" value="RimM_N"/>
</dbReference>
<dbReference type="InterPro" id="IPR036976">
    <property type="entry name" value="RimM_N_sf"/>
</dbReference>
<dbReference type="InterPro" id="IPR009000">
    <property type="entry name" value="Transl_B-barrel_sf"/>
</dbReference>
<dbReference type="NCBIfam" id="TIGR02273">
    <property type="entry name" value="16S_RimM"/>
    <property type="match status" value="1"/>
</dbReference>
<dbReference type="PANTHER" id="PTHR33692">
    <property type="entry name" value="RIBOSOME MATURATION FACTOR RIMM"/>
    <property type="match status" value="1"/>
</dbReference>
<dbReference type="PANTHER" id="PTHR33692:SF1">
    <property type="entry name" value="RIBOSOME MATURATION FACTOR RIMM"/>
    <property type="match status" value="1"/>
</dbReference>
<dbReference type="Pfam" id="PF05239">
    <property type="entry name" value="PRC"/>
    <property type="match status" value="1"/>
</dbReference>
<dbReference type="Pfam" id="PF01782">
    <property type="entry name" value="RimM"/>
    <property type="match status" value="1"/>
</dbReference>
<dbReference type="SUPFAM" id="SSF50346">
    <property type="entry name" value="PRC-barrel domain"/>
    <property type="match status" value="1"/>
</dbReference>
<dbReference type="SUPFAM" id="SSF50447">
    <property type="entry name" value="Translation proteins"/>
    <property type="match status" value="1"/>
</dbReference>
<organism>
    <name type="scientific">Petrotoga mobilis (strain DSM 10674 / SJ95)</name>
    <dbReference type="NCBI Taxonomy" id="403833"/>
    <lineage>
        <taxon>Bacteria</taxon>
        <taxon>Thermotogati</taxon>
        <taxon>Thermotogota</taxon>
        <taxon>Thermotogae</taxon>
        <taxon>Petrotogales</taxon>
        <taxon>Petrotogaceae</taxon>
        <taxon>Petrotoga</taxon>
    </lineage>
</organism>
<evidence type="ECO:0000255" key="1">
    <source>
        <dbReference type="HAMAP-Rule" id="MF_00014"/>
    </source>
</evidence>
<sequence>MNSLSNLLDNKISVAKIVNSHGVHGEVKIVPFTNVKDVITNLEEVLLYNTSTRNFFFSKVLQVKPLNKFFVLNLRGIKDMDEAKKMIGYEVFIDKKDLPSLNSEEYYWYEILDSEVYYEDGEYVGKVEEIIQTGANDVISIKNLEDDKEVLIPMTDHYIIELKKEDKSIIVKKIEWYENGTNQAD</sequence>